<protein>
    <recommendedName>
        <fullName>Anaphase-promoting complex subunit CDC26</fullName>
    </recommendedName>
    <alternativeName>
        <fullName>Cell division cycle protein 26 homolog</fullName>
    </alternativeName>
</protein>
<accession>Q3SZT7</accession>
<proteinExistence type="inferred from homology"/>
<keyword id="KW-0131">Cell cycle</keyword>
<keyword id="KW-0132">Cell division</keyword>
<keyword id="KW-0175">Coiled coil</keyword>
<keyword id="KW-0498">Mitosis</keyword>
<keyword id="KW-0539">Nucleus</keyword>
<keyword id="KW-0597">Phosphoprotein</keyword>
<keyword id="KW-1185">Reference proteome</keyword>
<keyword id="KW-0833">Ubl conjugation pathway</keyword>
<feature type="chain" id="PRO_0000271193" description="Anaphase-promoting complex subunit CDC26">
    <location>
        <begin position="1"/>
        <end position="85"/>
    </location>
</feature>
<feature type="region of interest" description="Disordered" evidence="3">
    <location>
        <begin position="30"/>
        <end position="85"/>
    </location>
</feature>
<feature type="coiled-coil region" evidence="2">
    <location>
        <begin position="7"/>
        <end position="36"/>
    </location>
</feature>
<feature type="compositionally biased region" description="Polar residues" evidence="3">
    <location>
        <begin position="73"/>
        <end position="85"/>
    </location>
</feature>
<feature type="modified residue" description="Phosphoserine" evidence="1">
    <location>
        <position position="42"/>
    </location>
</feature>
<evidence type="ECO:0000250" key="1">
    <source>
        <dbReference type="UniProtKB" id="Q8NHZ8"/>
    </source>
</evidence>
<evidence type="ECO:0000255" key="2"/>
<evidence type="ECO:0000256" key="3">
    <source>
        <dbReference type="SAM" id="MobiDB-lite"/>
    </source>
</evidence>
<evidence type="ECO:0000305" key="4"/>
<organism>
    <name type="scientific">Bos taurus</name>
    <name type="common">Bovine</name>
    <dbReference type="NCBI Taxonomy" id="9913"/>
    <lineage>
        <taxon>Eukaryota</taxon>
        <taxon>Metazoa</taxon>
        <taxon>Chordata</taxon>
        <taxon>Craniata</taxon>
        <taxon>Vertebrata</taxon>
        <taxon>Euteleostomi</taxon>
        <taxon>Mammalia</taxon>
        <taxon>Eutheria</taxon>
        <taxon>Laurasiatheria</taxon>
        <taxon>Artiodactyla</taxon>
        <taxon>Ruminantia</taxon>
        <taxon>Pecora</taxon>
        <taxon>Bovidae</taxon>
        <taxon>Bovinae</taxon>
        <taxon>Bos</taxon>
    </lineage>
</organism>
<comment type="function">
    <text evidence="1">Component of the anaphase promoting complex/cyclosome (APC/C), a cell cycle-regulated E3 ubiquitin ligase that controls progression through mitosis and the G1 phase of the cell cycle. The APC/C complex acts by mediating ubiquitination and subsequent degradation of target proteins: it mainly mediates the formation of 'Lys-11'-linked polyubiquitin chains and, to a lower extent, the formation of 'Lys-48'- and 'Lys-63'-linked polyubiquitin chains. The APC/C complex catalyzes assembly of branched 'Lys-11'-/'Lys-48'-linked branched ubiquitin chains on target proteins. May recruit the E2 ubiquitin-conjugating enzymes to the complex.</text>
</comment>
<comment type="pathway">
    <text evidence="1">Protein modification; protein ubiquitination.</text>
</comment>
<comment type="subunit">
    <text evidence="1">V-shaped homodimer. Interacts with CDC16. The mammalian APC/C is composed at least of 14 distinct subunits ANAPC1, ANAPC2, CDC27/APC3, ANAPC4, ANAPC5, CDC16/APC6, ANAPC7, CDC23/APC8, ANAPC10, ANAPC11, CDC26/APC12, ANAPC13, ANAPC15 and ANAPC16 that assemble into a complex of at least 19 chains with a combined molecular mass of around 1.2 MDa; APC/C interacts with FZR1 and FBXO5.</text>
</comment>
<comment type="subcellular location">
    <subcellularLocation>
        <location evidence="4">Nucleus</location>
    </subcellularLocation>
</comment>
<comment type="similarity">
    <text evidence="4">Belongs to the CDC26 family.</text>
</comment>
<reference key="1">
    <citation type="submission" date="2005-08" db="EMBL/GenBank/DDBJ databases">
        <authorList>
            <consortium name="NIH - Mammalian Gene Collection (MGC) project"/>
        </authorList>
    </citation>
    <scope>NUCLEOTIDE SEQUENCE [LARGE SCALE MRNA]</scope>
    <source>
        <strain>Crossbred X Angus</strain>
        <tissue>Liver</tissue>
    </source>
</reference>
<sequence length="85" mass="9811">MLRRKPTRLELKLDDIEEFESIRKDLETRKKQKEDVDIVGGSDGEGAIGLSSDPKSREQMINDRIGYKPQPKPNNRSSQFGNFEF</sequence>
<name>CDC26_BOVIN</name>
<dbReference type="EMBL" id="BC102716">
    <property type="protein sequence ID" value="AAI02717.1"/>
    <property type="molecule type" value="mRNA"/>
</dbReference>
<dbReference type="RefSeq" id="NP_001071621.1">
    <property type="nucleotide sequence ID" value="NM_001078153.2"/>
</dbReference>
<dbReference type="SMR" id="Q3SZT7"/>
<dbReference type="FunCoup" id="Q3SZT7">
    <property type="interactions" value="1620"/>
</dbReference>
<dbReference type="STRING" id="9913.ENSBTAP00000019191"/>
<dbReference type="PaxDb" id="9913-ENSBTAP00000019191"/>
<dbReference type="GeneID" id="777693"/>
<dbReference type="KEGG" id="bta:777693"/>
<dbReference type="CTD" id="246184"/>
<dbReference type="VEuPathDB" id="HostDB:ENSBTAG00000014430"/>
<dbReference type="eggNOG" id="ENOG502S5GK">
    <property type="taxonomic scope" value="Eukaryota"/>
</dbReference>
<dbReference type="HOGENOM" id="CLU_190086_0_0_1"/>
<dbReference type="InParanoid" id="Q3SZT7"/>
<dbReference type="OMA" id="NREQMIN"/>
<dbReference type="OrthoDB" id="2422341at2759"/>
<dbReference type="TreeFam" id="TF101057"/>
<dbReference type="Reactome" id="R-BTA-141430">
    <property type="pathway name" value="Inactivation of APC/C via direct inhibition of the APC/C complex"/>
</dbReference>
<dbReference type="Reactome" id="R-BTA-174048">
    <property type="pathway name" value="APC/C:Cdc20 mediated degradation of Cyclin B"/>
</dbReference>
<dbReference type="Reactome" id="R-BTA-174084">
    <property type="pathway name" value="Autodegradation of Cdh1 by Cdh1:APC/C"/>
</dbReference>
<dbReference type="Reactome" id="R-BTA-174154">
    <property type="pathway name" value="APC/C:Cdc20 mediated degradation of Securin"/>
</dbReference>
<dbReference type="Reactome" id="R-BTA-174178">
    <property type="pathway name" value="APC/C:Cdh1 mediated degradation of Cdc20 and other APC/C:Cdh1 targeted proteins in late mitosis/early G1"/>
</dbReference>
<dbReference type="Reactome" id="R-BTA-174184">
    <property type="pathway name" value="Cdc20:Phospho-APC/C mediated degradation of Cyclin A"/>
</dbReference>
<dbReference type="Reactome" id="R-BTA-176407">
    <property type="pathway name" value="Conversion from APC/C:Cdc20 to APC/C:Cdh1 in late anaphase"/>
</dbReference>
<dbReference type="Reactome" id="R-BTA-176408">
    <property type="pathway name" value="Regulation of APC/C activators between G1/S and early anaphase"/>
</dbReference>
<dbReference type="Reactome" id="R-BTA-176409">
    <property type="pathway name" value="APC/C:Cdc20 mediated degradation of mitotic proteins"/>
</dbReference>
<dbReference type="Reactome" id="R-BTA-176412">
    <property type="pathway name" value="Phosphorylation of the APC/C"/>
</dbReference>
<dbReference type="Reactome" id="R-BTA-179409">
    <property type="pathway name" value="APC-Cdc20 mediated degradation of Nek2A"/>
</dbReference>
<dbReference type="Reactome" id="R-BTA-2467813">
    <property type="pathway name" value="Separation of Sister Chromatids"/>
</dbReference>
<dbReference type="Reactome" id="R-BTA-2559582">
    <property type="pathway name" value="Senescence-Associated Secretory Phenotype (SASP)"/>
</dbReference>
<dbReference type="Reactome" id="R-BTA-68867">
    <property type="pathway name" value="Assembly of the pre-replicative complex"/>
</dbReference>
<dbReference type="Reactome" id="R-BTA-69017">
    <property type="pathway name" value="CDK-mediated phosphorylation and removal of Cdc6"/>
</dbReference>
<dbReference type="Reactome" id="R-BTA-983168">
    <property type="pathway name" value="Antigen processing: Ubiquitination &amp; Proteasome degradation"/>
</dbReference>
<dbReference type="UniPathway" id="UPA00143"/>
<dbReference type="Proteomes" id="UP000009136">
    <property type="component" value="Chromosome 8"/>
</dbReference>
<dbReference type="Bgee" id="ENSBTAG00000014430">
    <property type="expression patterns" value="Expressed in oocyte and 104 other cell types or tissues"/>
</dbReference>
<dbReference type="GO" id="GO:0005680">
    <property type="term" value="C:anaphase-promoting complex"/>
    <property type="evidence" value="ECO:0000250"/>
    <property type="project" value="UniProtKB"/>
</dbReference>
<dbReference type="GO" id="GO:0031145">
    <property type="term" value="P:anaphase-promoting complex-dependent catabolic process"/>
    <property type="evidence" value="ECO:0000250"/>
    <property type="project" value="UniProtKB"/>
</dbReference>
<dbReference type="GO" id="GO:0051301">
    <property type="term" value="P:cell division"/>
    <property type="evidence" value="ECO:0007669"/>
    <property type="project" value="UniProtKB-KW"/>
</dbReference>
<dbReference type="GO" id="GO:0141198">
    <property type="term" value="P:protein branched polyubiquitination"/>
    <property type="evidence" value="ECO:0000250"/>
    <property type="project" value="UniProtKB"/>
</dbReference>
<dbReference type="GO" id="GO:0070979">
    <property type="term" value="P:protein K11-linked ubiquitination"/>
    <property type="evidence" value="ECO:0000250"/>
    <property type="project" value="UniProtKB"/>
</dbReference>
<dbReference type="GO" id="GO:0070936">
    <property type="term" value="P:protein K48-linked ubiquitination"/>
    <property type="evidence" value="ECO:0000250"/>
    <property type="project" value="UniProtKB"/>
</dbReference>
<dbReference type="GO" id="GO:0007346">
    <property type="term" value="P:regulation of mitotic cell cycle"/>
    <property type="evidence" value="ECO:0000318"/>
    <property type="project" value="GO_Central"/>
</dbReference>
<dbReference type="InterPro" id="IPR018860">
    <property type="entry name" value="APC_suCDC26"/>
</dbReference>
<dbReference type="PANTHER" id="PTHR28579">
    <property type="entry name" value="ANAPHASE-PROMOTING COMPLEX SUBUNIT CDC26"/>
    <property type="match status" value="1"/>
</dbReference>
<dbReference type="PANTHER" id="PTHR28579:SF1">
    <property type="entry name" value="ANAPHASE-PROMOTING COMPLEX SUBUNIT CDC26"/>
    <property type="match status" value="1"/>
</dbReference>
<dbReference type="Pfam" id="PF10471">
    <property type="entry name" value="ANAPC_CDC26"/>
    <property type="match status" value="1"/>
</dbReference>
<gene>
    <name type="primary">CDC26</name>
</gene>